<gene>
    <name evidence="3" type="primary">SEPTIN10</name>
    <name type="synonym">SEPT10</name>
</gene>
<reference key="1">
    <citation type="submission" date="2004-11" db="EMBL/GenBank/DDBJ databases">
        <authorList>
            <consortium name="The German cDNA consortium"/>
        </authorList>
    </citation>
    <scope>NUCLEOTIDE SEQUENCE [LARGE SCALE MRNA]</scope>
    <source>
        <tissue>Kidney</tissue>
    </source>
</reference>
<protein>
    <recommendedName>
        <fullName>Septin-10</fullName>
    </recommendedName>
</protein>
<name>SEP10_PONAB</name>
<proteinExistence type="evidence at transcript level"/>
<dbReference type="EMBL" id="CR857561">
    <property type="protein sequence ID" value="CAH89839.1"/>
    <property type="molecule type" value="mRNA"/>
</dbReference>
<dbReference type="SMR" id="Q5REG8"/>
<dbReference type="FunCoup" id="Q5REG8">
    <property type="interactions" value="617"/>
</dbReference>
<dbReference type="STRING" id="9601.ENSPPYP00000013540"/>
<dbReference type="eggNOG" id="KOG3859">
    <property type="taxonomic scope" value="Eukaryota"/>
</dbReference>
<dbReference type="InParanoid" id="Q5REG8"/>
<dbReference type="Proteomes" id="UP000001595">
    <property type="component" value="Unplaced"/>
</dbReference>
<dbReference type="GO" id="GO:0005737">
    <property type="term" value="C:cytoplasm"/>
    <property type="evidence" value="ECO:0007669"/>
    <property type="project" value="UniProtKB-SubCell"/>
</dbReference>
<dbReference type="GO" id="GO:0005856">
    <property type="term" value="C:cytoskeleton"/>
    <property type="evidence" value="ECO:0007669"/>
    <property type="project" value="UniProtKB-SubCell"/>
</dbReference>
<dbReference type="GO" id="GO:0031514">
    <property type="term" value="C:motile cilium"/>
    <property type="evidence" value="ECO:0007669"/>
    <property type="project" value="UniProtKB-SubCell"/>
</dbReference>
<dbReference type="GO" id="GO:0005525">
    <property type="term" value="F:GTP binding"/>
    <property type="evidence" value="ECO:0007669"/>
    <property type="project" value="UniProtKB-KW"/>
</dbReference>
<dbReference type="GO" id="GO:0051301">
    <property type="term" value="P:cell division"/>
    <property type="evidence" value="ECO:0007669"/>
    <property type="project" value="UniProtKB-KW"/>
</dbReference>
<dbReference type="CDD" id="cd01850">
    <property type="entry name" value="CDC_Septin"/>
    <property type="match status" value="1"/>
</dbReference>
<dbReference type="FunFam" id="3.40.50.300:FF:000036">
    <property type="entry name" value="septin-6 isoform X2"/>
    <property type="match status" value="1"/>
</dbReference>
<dbReference type="Gene3D" id="3.40.50.300">
    <property type="entry name" value="P-loop containing nucleotide triphosphate hydrolases"/>
    <property type="match status" value="1"/>
</dbReference>
<dbReference type="InterPro" id="IPR030379">
    <property type="entry name" value="G_SEPTIN_dom"/>
</dbReference>
<dbReference type="InterPro" id="IPR027417">
    <property type="entry name" value="P-loop_NTPase"/>
</dbReference>
<dbReference type="InterPro" id="IPR016491">
    <property type="entry name" value="Septin"/>
</dbReference>
<dbReference type="PANTHER" id="PTHR18884">
    <property type="entry name" value="SEPTIN"/>
    <property type="match status" value="1"/>
</dbReference>
<dbReference type="Pfam" id="PF00735">
    <property type="entry name" value="Septin"/>
    <property type="match status" value="1"/>
</dbReference>
<dbReference type="PIRSF" id="PIRSF006698">
    <property type="entry name" value="Septin"/>
    <property type="match status" value="1"/>
</dbReference>
<dbReference type="SUPFAM" id="SSF52540">
    <property type="entry name" value="P-loop containing nucleoside triphosphate hydrolases"/>
    <property type="match status" value="1"/>
</dbReference>
<dbReference type="PROSITE" id="PS51719">
    <property type="entry name" value="G_SEPTIN"/>
    <property type="match status" value="1"/>
</dbReference>
<feature type="chain" id="PRO_0000173540" description="Septin-10">
    <location>
        <begin position="1"/>
        <end position="467"/>
    </location>
</feature>
<feature type="domain" description="Septin-type G" evidence="4">
    <location>
        <begin position="63"/>
        <end position="329"/>
    </location>
</feature>
<feature type="region of interest" description="G1 motif" evidence="4">
    <location>
        <begin position="73"/>
        <end position="80"/>
    </location>
</feature>
<feature type="region of interest" description="G3 motif" evidence="4">
    <location>
        <begin position="125"/>
        <end position="128"/>
    </location>
</feature>
<feature type="region of interest" description="G4 motif" evidence="4">
    <location>
        <begin position="208"/>
        <end position="211"/>
    </location>
</feature>
<feature type="binding site" evidence="1">
    <location>
        <begin position="73"/>
        <end position="80"/>
    </location>
    <ligand>
        <name>GTP</name>
        <dbReference type="ChEBI" id="CHEBI:37565"/>
    </ligand>
</feature>
<feature type="binding site" evidence="1">
    <location>
        <position position="128"/>
    </location>
    <ligand>
        <name>GTP</name>
        <dbReference type="ChEBI" id="CHEBI:37565"/>
    </ligand>
</feature>
<feature type="binding site" evidence="1">
    <location>
        <begin position="209"/>
        <end position="217"/>
    </location>
    <ligand>
        <name>GTP</name>
        <dbReference type="ChEBI" id="CHEBI:37565"/>
    </ligand>
</feature>
<feature type="binding site" evidence="1">
    <location>
        <position position="263"/>
    </location>
    <ligand>
        <name>GTP</name>
        <dbReference type="ChEBI" id="CHEBI:37565"/>
    </ligand>
</feature>
<feature type="binding site" evidence="1">
    <location>
        <position position="278"/>
    </location>
    <ligand>
        <name>GTP</name>
        <dbReference type="ChEBI" id="CHEBI:37565"/>
    </ligand>
</feature>
<accession>Q5REG8</accession>
<sequence>MASSEVARHLLFQSHMATKTTCMSSQGSDDEQRKRENIRSLTMSDHVGFESLPDQLVNRSIQQGFCFNILCVGETGIGKSTLIDTLFNTNFEDYESSHFCPNVKLKAQTYELQESNVQLKLTIVNTVGFGDQINKEESYQPIVDYIDAQFEAYLQEELKIKRSLFTYHDSRIHVCLYFISPTGHSLKTLDLLTMKNLDSKVNIIPVIAKADTVSKTELQKFKIKLMSELVSNGVQIYQFPTDDDTIAKVNAAMNGQLPFAVVGSMDEVKVGNKMVKARQYPWGVVQVENENHCDFVKLREVLICTNMEDLREQTHTRHYELYRRCKLEEMGFTDVGPENKPVSLQETYEAKRHEFHGERQRKEEEMKQMFVQRVKEKEAILKEAERELQAKFEHLKRLHQEERMKLEEKRKLLEEEIIAFSKKKATSEIFHSQSFLATGSNLRKQPQLLIFMEKYFQVQGQYVSQSE</sequence>
<keyword id="KW-0131">Cell cycle</keyword>
<keyword id="KW-0132">Cell division</keyword>
<keyword id="KW-0966">Cell projection</keyword>
<keyword id="KW-0969">Cilium</keyword>
<keyword id="KW-0963">Cytoplasm</keyword>
<keyword id="KW-0206">Cytoskeleton</keyword>
<keyword id="KW-0282">Flagellum</keyword>
<keyword id="KW-0342">GTP-binding</keyword>
<keyword id="KW-0547">Nucleotide-binding</keyword>
<keyword id="KW-1185">Reference proteome</keyword>
<comment type="function">
    <text evidence="1 5">Filament-forming cytoskeletal GTPase (By similarity). May play a role in cytokinesis (Potential).</text>
</comment>
<comment type="subunit">
    <text evidence="2">Septins polymerize into heterooligomeric protein complexes that form filaments, and can associate with cellular membranes, actin filaments and microtubules. GTPase activity is required for filament formation (By similarity). Interacts with ADGB (By similarity).</text>
</comment>
<comment type="subcellular location">
    <subcellularLocation>
        <location evidence="3">Cytoplasm</location>
    </subcellularLocation>
    <subcellularLocation>
        <location evidence="1">Cytoplasm</location>
        <location evidence="1">Cytoskeleton</location>
    </subcellularLocation>
    <subcellularLocation>
        <location evidence="2">Cell projection</location>
        <location evidence="2">Cilium</location>
        <location evidence="2">Flagellum</location>
    </subcellularLocation>
    <text evidence="2">Detected in the annulus of the sperm flagellum and in the neck region in spermatids and mature sperm.</text>
</comment>
<comment type="PTM">
    <text evidence="2">Proteolytically cleaved in vitro in a calmodulin-dependent manner.</text>
</comment>
<comment type="similarity">
    <text evidence="4">Belongs to the TRAFAC class TrmE-Era-EngA-EngB-Septin-like GTPase superfamily. Septin GTPase family.</text>
</comment>
<organism>
    <name type="scientific">Pongo abelii</name>
    <name type="common">Sumatran orangutan</name>
    <name type="synonym">Pongo pygmaeus abelii</name>
    <dbReference type="NCBI Taxonomy" id="9601"/>
    <lineage>
        <taxon>Eukaryota</taxon>
        <taxon>Metazoa</taxon>
        <taxon>Chordata</taxon>
        <taxon>Craniata</taxon>
        <taxon>Vertebrata</taxon>
        <taxon>Euteleostomi</taxon>
        <taxon>Mammalia</taxon>
        <taxon>Eutheria</taxon>
        <taxon>Euarchontoglires</taxon>
        <taxon>Primates</taxon>
        <taxon>Haplorrhini</taxon>
        <taxon>Catarrhini</taxon>
        <taxon>Hominidae</taxon>
        <taxon>Pongo</taxon>
    </lineage>
</organism>
<evidence type="ECO:0000250" key="1"/>
<evidence type="ECO:0000250" key="2">
    <source>
        <dbReference type="UniProtKB" id="Q8C650"/>
    </source>
</evidence>
<evidence type="ECO:0000250" key="3">
    <source>
        <dbReference type="UniProtKB" id="Q9P0V9"/>
    </source>
</evidence>
<evidence type="ECO:0000255" key="4">
    <source>
        <dbReference type="PROSITE-ProRule" id="PRU01056"/>
    </source>
</evidence>
<evidence type="ECO:0000305" key="5"/>